<comment type="function">
    <text evidence="1">Binds 16S rRNA, required for the assembly of 30S particles and may also be responsible for determining the conformation of the 16S rRNA at the A site.</text>
</comment>
<comment type="subunit">
    <text evidence="1">Part of the 30S ribosomal subunit. Contacts proteins S3 and S10.</text>
</comment>
<comment type="similarity">
    <text evidence="1">Belongs to the universal ribosomal protein uS14 family.</text>
</comment>
<accession>A5CV84</accession>
<gene>
    <name evidence="1" type="primary">rpsN</name>
    <name type="ordered locus">CMM_2935</name>
</gene>
<dbReference type="EMBL" id="AM711867">
    <property type="protein sequence ID" value="CAN03022.1"/>
    <property type="molecule type" value="Genomic_DNA"/>
</dbReference>
<dbReference type="RefSeq" id="WP_012039623.1">
    <property type="nucleotide sequence ID" value="NC_009480.1"/>
</dbReference>
<dbReference type="SMR" id="A5CV84"/>
<dbReference type="GeneID" id="92948953"/>
<dbReference type="KEGG" id="cmi:CMM_2935"/>
<dbReference type="eggNOG" id="COG0199">
    <property type="taxonomic scope" value="Bacteria"/>
</dbReference>
<dbReference type="HOGENOM" id="CLU_139869_0_1_11"/>
<dbReference type="OrthoDB" id="9810484at2"/>
<dbReference type="Proteomes" id="UP000001564">
    <property type="component" value="Chromosome"/>
</dbReference>
<dbReference type="GO" id="GO:0015935">
    <property type="term" value="C:small ribosomal subunit"/>
    <property type="evidence" value="ECO:0007669"/>
    <property type="project" value="TreeGrafter"/>
</dbReference>
<dbReference type="GO" id="GO:0019843">
    <property type="term" value="F:rRNA binding"/>
    <property type="evidence" value="ECO:0007669"/>
    <property type="project" value="UniProtKB-UniRule"/>
</dbReference>
<dbReference type="GO" id="GO:0003735">
    <property type="term" value="F:structural constituent of ribosome"/>
    <property type="evidence" value="ECO:0007669"/>
    <property type="project" value="InterPro"/>
</dbReference>
<dbReference type="GO" id="GO:0006412">
    <property type="term" value="P:translation"/>
    <property type="evidence" value="ECO:0007669"/>
    <property type="project" value="UniProtKB-UniRule"/>
</dbReference>
<dbReference type="FunFam" id="1.10.287.1480:FF:000001">
    <property type="entry name" value="30S ribosomal protein S14"/>
    <property type="match status" value="1"/>
</dbReference>
<dbReference type="Gene3D" id="1.10.287.1480">
    <property type="match status" value="1"/>
</dbReference>
<dbReference type="HAMAP" id="MF_00537">
    <property type="entry name" value="Ribosomal_uS14_1"/>
    <property type="match status" value="1"/>
</dbReference>
<dbReference type="InterPro" id="IPR001209">
    <property type="entry name" value="Ribosomal_uS14"/>
</dbReference>
<dbReference type="InterPro" id="IPR023036">
    <property type="entry name" value="Ribosomal_uS14_bac/plastid"/>
</dbReference>
<dbReference type="NCBIfam" id="NF006477">
    <property type="entry name" value="PRK08881.1"/>
    <property type="match status" value="1"/>
</dbReference>
<dbReference type="PANTHER" id="PTHR19836">
    <property type="entry name" value="30S RIBOSOMAL PROTEIN S14"/>
    <property type="match status" value="1"/>
</dbReference>
<dbReference type="PANTHER" id="PTHR19836:SF23">
    <property type="entry name" value="SMALL RIBOSOMAL SUBUNIT PROTEIN US14A"/>
    <property type="match status" value="1"/>
</dbReference>
<dbReference type="Pfam" id="PF00253">
    <property type="entry name" value="Ribosomal_S14"/>
    <property type="match status" value="1"/>
</dbReference>
<dbReference type="SUPFAM" id="SSF57716">
    <property type="entry name" value="Glucocorticoid receptor-like (DNA-binding domain)"/>
    <property type="match status" value="1"/>
</dbReference>
<proteinExistence type="inferred from homology"/>
<sequence length="101" mass="11479">MAKKSKIARNEQRKVIVERYAAKRLELKKALVDPNGTDESREAARAGIQRLPRDASPIRVRNRDGIDGRPRGNLSKFGISRVRFRDMAHRGELPGITKSSW</sequence>
<name>RS14_CLAM3</name>
<evidence type="ECO:0000255" key="1">
    <source>
        <dbReference type="HAMAP-Rule" id="MF_00537"/>
    </source>
</evidence>
<evidence type="ECO:0000256" key="2">
    <source>
        <dbReference type="SAM" id="MobiDB-lite"/>
    </source>
</evidence>
<evidence type="ECO:0000305" key="3"/>
<keyword id="KW-0687">Ribonucleoprotein</keyword>
<keyword id="KW-0689">Ribosomal protein</keyword>
<keyword id="KW-0694">RNA-binding</keyword>
<keyword id="KW-0699">rRNA-binding</keyword>
<organism>
    <name type="scientific">Clavibacter michiganensis subsp. michiganensis (strain NCPPB 382)</name>
    <dbReference type="NCBI Taxonomy" id="443906"/>
    <lineage>
        <taxon>Bacteria</taxon>
        <taxon>Bacillati</taxon>
        <taxon>Actinomycetota</taxon>
        <taxon>Actinomycetes</taxon>
        <taxon>Micrococcales</taxon>
        <taxon>Microbacteriaceae</taxon>
        <taxon>Clavibacter</taxon>
    </lineage>
</organism>
<protein>
    <recommendedName>
        <fullName evidence="1">Small ribosomal subunit protein uS14</fullName>
    </recommendedName>
    <alternativeName>
        <fullName evidence="3">30S ribosomal protein S14</fullName>
    </alternativeName>
</protein>
<reference key="1">
    <citation type="journal article" date="2008" name="J. Bacteriol.">
        <title>The genome sequence of the tomato-pathogenic actinomycete Clavibacter michiganensis subsp. michiganensis NCPPB382 reveals a large island involved in pathogenicity.</title>
        <authorList>
            <person name="Gartemann K.-H."/>
            <person name="Abt B."/>
            <person name="Bekel T."/>
            <person name="Burger A."/>
            <person name="Engemann J."/>
            <person name="Fluegel M."/>
            <person name="Gaigalat L."/>
            <person name="Goesmann A."/>
            <person name="Graefen I."/>
            <person name="Kalinowski J."/>
            <person name="Kaup O."/>
            <person name="Kirchner O."/>
            <person name="Krause L."/>
            <person name="Linke B."/>
            <person name="McHardy A."/>
            <person name="Meyer F."/>
            <person name="Pohle S."/>
            <person name="Rueckert C."/>
            <person name="Schneiker S."/>
            <person name="Zellermann E.-M."/>
            <person name="Puehler A."/>
            <person name="Eichenlaub R."/>
            <person name="Kaiser O."/>
            <person name="Bartels D."/>
        </authorList>
    </citation>
    <scope>NUCLEOTIDE SEQUENCE [LARGE SCALE GENOMIC DNA]</scope>
    <source>
        <strain>NCPPB 382</strain>
    </source>
</reference>
<feature type="chain" id="PRO_1000128365" description="Small ribosomal subunit protein uS14">
    <location>
        <begin position="1"/>
        <end position="101"/>
    </location>
</feature>
<feature type="region of interest" description="Disordered" evidence="2">
    <location>
        <begin position="36"/>
        <end position="72"/>
    </location>
</feature>
<feature type="compositionally biased region" description="Basic and acidic residues" evidence="2">
    <location>
        <begin position="61"/>
        <end position="70"/>
    </location>
</feature>